<sequence>MTEDSRTILLIGSGPIQIGQAAEFDYSGAQACRALQEEGARVVLVNSNPATIMTDPEMADAVYIEPIEPDAIAEVIEQEDPDGVIAGLGGQTGLNVTAALAEQGVLDEHDVDVMGTPLDTIYATEDRDLFRQRMADLGQPVPASTTIALGDDETATDIDEGALRERVDDAVEAVGGLPVIARTTYTLGGSGSGVVHDFEALVDRVRTGLRLSRNAEVLVTESITGWVELEYEVMRDAGDSCIIVCNMENIDPMGIHTGESTVVTPSQIIPDDGHQEMRNAAVAVIRELGIQGGCNIQFAWRDDGTPGGEYRVVEVNPRVSRSSALASKATGYPIARVTAKVALGKRLHEIDNEITGQTTAAFEPAIDYVVTKVPRWPNDKFPEVDFELSTAMKSTGEAMAIGRTFEESLLKALRSSEYDPSVDWATVSDDELAADYLQRPSPDRPYAVFEAFERGFTVGDVNDHTGFREWYLQRFQNVAAASAAASEGDVATPAALGYTNSAVAALASDGGDVAVDDVAATAPERTFKQVDTCAGEFAASTPYYYSARSQGSTGSDVRADRDAHSVVIVGGGPIRIGQGVEFDYCTVHAVRALREAGIDAHVVNNNPETVSTDYDTSDGLFFEPITAEEVADVVEATNADGVMVQFGGQTSVDVGAPLEAELERRGLDCEIMGTDVDAMDLAEDRDRFNRLLDERDISQPDGGSATSVAGALELAAEVGYPVLVRPSYVLGGRAMEIVHDDDELRRYVEEAVRVSPEKPVLVDEFLADAVELDVDAVSDGEDVLVGGVMEHIESAGVHSGDSACVIPPRGLGDDILARVREVTTEIARALDTVGLLNVQLAVQDGEVYVLEANPRSSRTVPFVSKATGVPIAKLAAKVMAGESLADLDASEGVPEQYSVKEVVLPFDRLPGSDPRLGPEMKSTGEVMGTASDPGMAYWKAQVAASNAPVPGSTAVVDLLVEGLGERFEVVTVKDVPAAIRRGEVEFLVSDDRDALTAAVEAEIPYVSTVAAAEAMREGIAAADGAREAMPVADRPVNDETWG</sequence>
<gene>
    <name evidence="1" type="primary">carB</name>
    <name type="ordered locus">VNG_1814G</name>
</gene>
<evidence type="ECO:0000255" key="1">
    <source>
        <dbReference type="HAMAP-Rule" id="MF_01210"/>
    </source>
</evidence>
<accession>Q9HP43</accession>
<comment type="function">
    <text evidence="1">Large subunit of the glutamine-dependent carbamoyl phosphate synthetase (CPSase). CPSase catalyzes the formation of carbamoyl phosphate from the ammonia moiety of glutamine, carbonate, and phosphate donated by ATP, constituting the first step of 2 biosynthetic pathways, one leading to arginine and/or urea and the other to pyrimidine nucleotides. The large subunit (synthetase) binds the substrates ammonia (free or transferred from glutamine from the small subunit), hydrogencarbonate and ATP and carries out an ATP-coupled ligase reaction, activating hydrogencarbonate by forming carboxy phosphate which reacts with ammonia to form carbamoyl phosphate.</text>
</comment>
<comment type="catalytic activity">
    <reaction evidence="1">
        <text>hydrogencarbonate + L-glutamine + 2 ATP + H2O = carbamoyl phosphate + L-glutamate + 2 ADP + phosphate + 2 H(+)</text>
        <dbReference type="Rhea" id="RHEA:18633"/>
        <dbReference type="ChEBI" id="CHEBI:15377"/>
        <dbReference type="ChEBI" id="CHEBI:15378"/>
        <dbReference type="ChEBI" id="CHEBI:17544"/>
        <dbReference type="ChEBI" id="CHEBI:29985"/>
        <dbReference type="ChEBI" id="CHEBI:30616"/>
        <dbReference type="ChEBI" id="CHEBI:43474"/>
        <dbReference type="ChEBI" id="CHEBI:58228"/>
        <dbReference type="ChEBI" id="CHEBI:58359"/>
        <dbReference type="ChEBI" id="CHEBI:456216"/>
        <dbReference type="EC" id="6.3.5.5"/>
    </reaction>
</comment>
<comment type="catalytic activity">
    <molecule>Carbamoyl phosphate synthase large chain</molecule>
    <reaction evidence="1">
        <text>hydrogencarbonate + NH4(+) + 2 ATP = carbamoyl phosphate + 2 ADP + phosphate + 2 H(+)</text>
        <dbReference type="Rhea" id="RHEA:18029"/>
        <dbReference type="ChEBI" id="CHEBI:15378"/>
        <dbReference type="ChEBI" id="CHEBI:17544"/>
        <dbReference type="ChEBI" id="CHEBI:28938"/>
        <dbReference type="ChEBI" id="CHEBI:30616"/>
        <dbReference type="ChEBI" id="CHEBI:43474"/>
        <dbReference type="ChEBI" id="CHEBI:58228"/>
        <dbReference type="ChEBI" id="CHEBI:456216"/>
        <dbReference type="EC" id="6.3.4.16"/>
    </reaction>
</comment>
<comment type="cofactor">
    <cofactor evidence="1">
        <name>Mg(2+)</name>
        <dbReference type="ChEBI" id="CHEBI:18420"/>
    </cofactor>
    <cofactor evidence="1">
        <name>Mn(2+)</name>
        <dbReference type="ChEBI" id="CHEBI:29035"/>
    </cofactor>
    <text evidence="1">Binds 4 Mg(2+) or Mn(2+) ions per subunit.</text>
</comment>
<comment type="pathway">
    <text evidence="1">Amino-acid biosynthesis; L-arginine biosynthesis; carbamoyl phosphate from bicarbonate: step 1/1.</text>
</comment>
<comment type="pathway">
    <text evidence="1">Pyrimidine metabolism; UMP biosynthesis via de novo pathway; (S)-dihydroorotate from bicarbonate: step 1/3.</text>
</comment>
<comment type="subunit">
    <text evidence="1">Composed of two chains; the small (or glutamine) chain promotes the hydrolysis of glutamine to ammonia, which is used by the large (or ammonia) chain to synthesize carbamoyl phosphate. Tetramer of heterodimers (alpha,beta)4.</text>
</comment>
<comment type="domain">
    <text evidence="1">The large subunit is composed of 2 ATP-grasp domains that are involved in binding the 2 ATP molecules needed for carbamoyl phosphate synthesis. The N-terminal ATP-grasp domain (referred to as the carboxyphosphate synthetic component) catalyzes the ATP-dependent phosphorylation of hydrogencarbonate to carboxyphosphate and the subsequent nucleophilic attack by ammonia to form a carbamate intermediate. The C-terminal ATP-grasp domain (referred to as the carbamoyl phosphate synthetic component) then catalyzes the phosphorylation of carbamate with the second ATP to form the end product carbamoyl phosphate. The reactive and unstable enzyme intermediates are sequentially channeled from one active site to the next through the interior of the protein over a distance of at least 96 A.</text>
</comment>
<comment type="similarity">
    <text evidence="1">Belongs to the CarB family.</text>
</comment>
<name>CARB_HALSA</name>
<reference key="1">
    <citation type="journal article" date="2000" name="Proc. Natl. Acad. Sci. U.S.A.">
        <title>Genome sequence of Halobacterium species NRC-1.</title>
        <authorList>
            <person name="Ng W.V."/>
            <person name="Kennedy S.P."/>
            <person name="Mahairas G.G."/>
            <person name="Berquist B."/>
            <person name="Pan M."/>
            <person name="Shukla H.D."/>
            <person name="Lasky S.R."/>
            <person name="Baliga N.S."/>
            <person name="Thorsson V."/>
            <person name="Sbrogna J."/>
            <person name="Swartzell S."/>
            <person name="Weir D."/>
            <person name="Hall J."/>
            <person name="Dahl T.A."/>
            <person name="Welti R."/>
            <person name="Goo Y.A."/>
            <person name="Leithauser B."/>
            <person name="Keller K."/>
            <person name="Cruz R."/>
            <person name="Danson M.J."/>
            <person name="Hough D.W."/>
            <person name="Maddocks D.G."/>
            <person name="Jablonski P.E."/>
            <person name="Krebs M.P."/>
            <person name="Angevine C.M."/>
            <person name="Dale H."/>
            <person name="Isenbarger T.A."/>
            <person name="Peck R.F."/>
            <person name="Pohlschroder M."/>
            <person name="Spudich J.L."/>
            <person name="Jung K.-H."/>
            <person name="Alam M."/>
            <person name="Freitas T."/>
            <person name="Hou S."/>
            <person name="Daniels C.J."/>
            <person name="Dennis P.P."/>
            <person name="Omer A.D."/>
            <person name="Ebhardt H."/>
            <person name="Lowe T.M."/>
            <person name="Liang P."/>
            <person name="Riley M."/>
            <person name="Hood L."/>
            <person name="DasSarma S."/>
        </authorList>
    </citation>
    <scope>NUCLEOTIDE SEQUENCE [LARGE SCALE GENOMIC DNA]</scope>
    <source>
        <strain>ATCC 700922 / JCM 11081 / NRC-1</strain>
    </source>
</reference>
<protein>
    <recommendedName>
        <fullName evidence="1">Carbamoyl phosphate synthase large chain</fullName>
        <ecNumber evidence="1">6.3.4.16</ecNumber>
        <ecNumber evidence="1">6.3.5.5</ecNumber>
    </recommendedName>
    <alternativeName>
        <fullName evidence="1">Carbamoyl phosphate synthetase ammonia chain</fullName>
    </alternativeName>
</protein>
<dbReference type="EC" id="6.3.4.16" evidence="1"/>
<dbReference type="EC" id="6.3.5.5" evidence="1"/>
<dbReference type="EMBL" id="AE004437">
    <property type="protein sequence ID" value="AAG20027.1"/>
    <property type="molecule type" value="Genomic_DNA"/>
</dbReference>
<dbReference type="PIR" id="G84332">
    <property type="entry name" value="G84332"/>
</dbReference>
<dbReference type="RefSeq" id="WP_010903325.1">
    <property type="nucleotide sequence ID" value="NC_002607.1"/>
</dbReference>
<dbReference type="SMR" id="Q9HP43"/>
<dbReference type="STRING" id="64091.VNG_1814G"/>
<dbReference type="PaxDb" id="64091-VNG_1814G"/>
<dbReference type="GeneID" id="68694446"/>
<dbReference type="KEGG" id="hal:VNG_1814G"/>
<dbReference type="PATRIC" id="fig|64091.14.peg.1383"/>
<dbReference type="HOGENOM" id="CLU_000513_1_0_2"/>
<dbReference type="InParanoid" id="Q9HP43"/>
<dbReference type="OrthoDB" id="85487at2157"/>
<dbReference type="PhylomeDB" id="Q9HP43"/>
<dbReference type="UniPathway" id="UPA00068">
    <property type="reaction ID" value="UER00171"/>
</dbReference>
<dbReference type="UniPathway" id="UPA00070">
    <property type="reaction ID" value="UER00115"/>
</dbReference>
<dbReference type="Proteomes" id="UP000000554">
    <property type="component" value="Chromosome"/>
</dbReference>
<dbReference type="GO" id="GO:0005737">
    <property type="term" value="C:cytoplasm"/>
    <property type="evidence" value="ECO:0000318"/>
    <property type="project" value="GO_Central"/>
</dbReference>
<dbReference type="GO" id="GO:0005524">
    <property type="term" value="F:ATP binding"/>
    <property type="evidence" value="ECO:0007669"/>
    <property type="project" value="UniProtKB-UniRule"/>
</dbReference>
<dbReference type="GO" id="GO:0004087">
    <property type="term" value="F:carbamoyl-phosphate synthase (ammonia) activity"/>
    <property type="evidence" value="ECO:0007669"/>
    <property type="project" value="RHEA"/>
</dbReference>
<dbReference type="GO" id="GO:0004088">
    <property type="term" value="F:carbamoyl-phosphate synthase (glutamine-hydrolyzing) activity"/>
    <property type="evidence" value="ECO:0007669"/>
    <property type="project" value="UniProtKB-UniRule"/>
</dbReference>
<dbReference type="GO" id="GO:0046872">
    <property type="term" value="F:metal ion binding"/>
    <property type="evidence" value="ECO:0007669"/>
    <property type="project" value="UniProtKB-KW"/>
</dbReference>
<dbReference type="GO" id="GO:0044205">
    <property type="term" value="P:'de novo' UMP biosynthetic process"/>
    <property type="evidence" value="ECO:0007669"/>
    <property type="project" value="UniProtKB-UniRule"/>
</dbReference>
<dbReference type="GO" id="GO:0006541">
    <property type="term" value="P:glutamine metabolic process"/>
    <property type="evidence" value="ECO:0000318"/>
    <property type="project" value="GO_Central"/>
</dbReference>
<dbReference type="GO" id="GO:0006526">
    <property type="term" value="P:L-arginine biosynthetic process"/>
    <property type="evidence" value="ECO:0007669"/>
    <property type="project" value="UniProtKB-UniRule"/>
</dbReference>
<dbReference type="FunFam" id="3.30.1490.20:FF:000001">
    <property type="entry name" value="Carbamoyl-phosphate synthase large chain"/>
    <property type="match status" value="1"/>
</dbReference>
<dbReference type="FunFam" id="3.30.470.20:FF:000013">
    <property type="entry name" value="Carbamoyl-phosphate synthase large chain"/>
    <property type="match status" value="1"/>
</dbReference>
<dbReference type="FunFam" id="3.40.50.20:FF:000001">
    <property type="entry name" value="Carbamoyl-phosphate synthase large chain"/>
    <property type="match status" value="2"/>
</dbReference>
<dbReference type="Gene3D" id="3.40.50.20">
    <property type="match status" value="2"/>
</dbReference>
<dbReference type="Gene3D" id="3.30.470.20">
    <property type="entry name" value="ATP-grasp fold, B domain"/>
    <property type="match status" value="2"/>
</dbReference>
<dbReference type="Gene3D" id="1.10.1030.10">
    <property type="entry name" value="Carbamoyl-phosphate synthetase, large subunit oligomerisation domain"/>
    <property type="match status" value="1"/>
</dbReference>
<dbReference type="HAMAP" id="MF_01210_A">
    <property type="entry name" value="CPSase_L_chain_A"/>
    <property type="match status" value="1"/>
</dbReference>
<dbReference type="InterPro" id="IPR011761">
    <property type="entry name" value="ATP-grasp"/>
</dbReference>
<dbReference type="InterPro" id="IPR006275">
    <property type="entry name" value="CarbamoylP_synth_lsu"/>
</dbReference>
<dbReference type="InterPro" id="IPR005480">
    <property type="entry name" value="CarbamoylP_synth_lsu_oligo"/>
</dbReference>
<dbReference type="InterPro" id="IPR036897">
    <property type="entry name" value="CarbamoylP_synth_lsu_oligo_sf"/>
</dbReference>
<dbReference type="InterPro" id="IPR005479">
    <property type="entry name" value="CbamoylP_synth_lsu-like_ATP-bd"/>
</dbReference>
<dbReference type="InterPro" id="IPR005483">
    <property type="entry name" value="CbamoylP_synth_lsu_CPSase_dom"/>
</dbReference>
<dbReference type="InterPro" id="IPR011607">
    <property type="entry name" value="MGS-like_dom"/>
</dbReference>
<dbReference type="InterPro" id="IPR016185">
    <property type="entry name" value="PreATP-grasp_dom_sf"/>
</dbReference>
<dbReference type="NCBIfam" id="TIGR01369">
    <property type="entry name" value="CPSaseII_lrg"/>
    <property type="match status" value="1"/>
</dbReference>
<dbReference type="NCBIfam" id="NF003671">
    <property type="entry name" value="PRK05294.1"/>
    <property type="match status" value="1"/>
</dbReference>
<dbReference type="NCBIfam" id="NF009455">
    <property type="entry name" value="PRK12815.1"/>
    <property type="match status" value="1"/>
</dbReference>
<dbReference type="PANTHER" id="PTHR11405:SF53">
    <property type="entry name" value="CARBAMOYL-PHOSPHATE SYNTHASE [AMMONIA], MITOCHONDRIAL"/>
    <property type="match status" value="1"/>
</dbReference>
<dbReference type="PANTHER" id="PTHR11405">
    <property type="entry name" value="CARBAMOYLTRANSFERASE FAMILY MEMBER"/>
    <property type="match status" value="1"/>
</dbReference>
<dbReference type="Pfam" id="PF02786">
    <property type="entry name" value="CPSase_L_D2"/>
    <property type="match status" value="2"/>
</dbReference>
<dbReference type="Pfam" id="PF02787">
    <property type="entry name" value="CPSase_L_D3"/>
    <property type="match status" value="1"/>
</dbReference>
<dbReference type="PRINTS" id="PR00098">
    <property type="entry name" value="CPSASE"/>
</dbReference>
<dbReference type="SMART" id="SM01096">
    <property type="entry name" value="CPSase_L_D3"/>
    <property type="match status" value="1"/>
</dbReference>
<dbReference type="SUPFAM" id="SSF48108">
    <property type="entry name" value="Carbamoyl phosphate synthetase, large subunit connection domain"/>
    <property type="match status" value="1"/>
</dbReference>
<dbReference type="SUPFAM" id="SSF56059">
    <property type="entry name" value="Glutathione synthetase ATP-binding domain-like"/>
    <property type="match status" value="2"/>
</dbReference>
<dbReference type="SUPFAM" id="SSF52440">
    <property type="entry name" value="PreATP-grasp domain"/>
    <property type="match status" value="2"/>
</dbReference>
<dbReference type="PROSITE" id="PS50975">
    <property type="entry name" value="ATP_GRASP"/>
    <property type="match status" value="2"/>
</dbReference>
<dbReference type="PROSITE" id="PS00866">
    <property type="entry name" value="CPSASE_1"/>
    <property type="match status" value="1"/>
</dbReference>
<dbReference type="PROSITE" id="PS00867">
    <property type="entry name" value="CPSASE_2"/>
    <property type="match status" value="1"/>
</dbReference>
<dbReference type="PROSITE" id="PS51855">
    <property type="entry name" value="MGS"/>
    <property type="match status" value="1"/>
</dbReference>
<proteinExistence type="inferred from homology"/>
<feature type="chain" id="PRO_0000145072" description="Carbamoyl phosphate synthase large chain">
    <location>
        <begin position="1"/>
        <end position="1042"/>
    </location>
</feature>
<feature type="domain" description="ATP-grasp 1" evidence="1">
    <location>
        <begin position="131"/>
        <end position="343"/>
    </location>
</feature>
<feature type="domain" description="ATP-grasp 2" evidence="1">
    <location>
        <begin position="689"/>
        <end position="880"/>
    </location>
</feature>
<feature type="domain" description="MGS-like" evidence="1">
    <location>
        <begin position="947"/>
        <end position="1042"/>
    </location>
</feature>
<feature type="region of interest" description="Carboxyphosphate synthetic domain" evidence="1">
    <location>
        <begin position="1"/>
        <end position="417"/>
    </location>
</feature>
<feature type="region of interest" description="Oligomerization domain" evidence="1">
    <location>
        <begin position="418"/>
        <end position="558"/>
    </location>
</feature>
<feature type="region of interest" description="Carbamoyl phosphate synthetic domain" evidence="1">
    <location>
        <begin position="559"/>
        <end position="947"/>
    </location>
</feature>
<feature type="region of interest" description="Allosteric domain" evidence="1">
    <location>
        <begin position="948"/>
        <end position="1042"/>
    </location>
</feature>
<feature type="binding site" evidence="1">
    <location>
        <position position="127"/>
    </location>
    <ligand>
        <name>ATP</name>
        <dbReference type="ChEBI" id="CHEBI:30616"/>
        <label>1</label>
    </ligand>
</feature>
<feature type="binding site" evidence="1">
    <location>
        <position position="182"/>
    </location>
    <ligand>
        <name>ATP</name>
        <dbReference type="ChEBI" id="CHEBI:30616"/>
        <label>1</label>
    </ligand>
</feature>
<feature type="binding site" evidence="1">
    <location>
        <position position="188"/>
    </location>
    <ligand>
        <name>ATP</name>
        <dbReference type="ChEBI" id="CHEBI:30616"/>
        <label>1</label>
    </ligand>
</feature>
<feature type="binding site" evidence="1">
    <location>
        <position position="189"/>
    </location>
    <ligand>
        <name>ATP</name>
        <dbReference type="ChEBI" id="CHEBI:30616"/>
        <label>1</label>
    </ligand>
</feature>
<feature type="binding site" evidence="1">
    <location>
        <position position="221"/>
    </location>
    <ligand>
        <name>ATP</name>
        <dbReference type="ChEBI" id="CHEBI:30616"/>
        <label>1</label>
    </ligand>
</feature>
<feature type="binding site" evidence="1">
    <location>
        <position position="223"/>
    </location>
    <ligand>
        <name>ATP</name>
        <dbReference type="ChEBI" id="CHEBI:30616"/>
        <label>1</label>
    </ligand>
</feature>
<feature type="binding site" evidence="1">
    <location>
        <position position="228"/>
    </location>
    <ligand>
        <name>ATP</name>
        <dbReference type="ChEBI" id="CHEBI:30616"/>
        <label>1</label>
    </ligand>
</feature>
<feature type="binding site" evidence="1">
    <location>
        <position position="254"/>
    </location>
    <ligand>
        <name>ATP</name>
        <dbReference type="ChEBI" id="CHEBI:30616"/>
        <label>1</label>
    </ligand>
</feature>
<feature type="binding site" evidence="1">
    <location>
        <position position="255"/>
    </location>
    <ligand>
        <name>ATP</name>
        <dbReference type="ChEBI" id="CHEBI:30616"/>
        <label>1</label>
    </ligand>
</feature>
<feature type="binding site" evidence="1">
    <location>
        <position position="256"/>
    </location>
    <ligand>
        <name>ATP</name>
        <dbReference type="ChEBI" id="CHEBI:30616"/>
        <label>1</label>
    </ligand>
</feature>
<feature type="binding site" evidence="1">
    <location>
        <position position="297"/>
    </location>
    <ligand>
        <name>ATP</name>
        <dbReference type="ChEBI" id="CHEBI:30616"/>
        <label>1</label>
    </ligand>
</feature>
<feature type="binding site" evidence="1">
    <location>
        <position position="297"/>
    </location>
    <ligand>
        <name>Mg(2+)</name>
        <dbReference type="ChEBI" id="CHEBI:18420"/>
        <label>1</label>
    </ligand>
</feature>
<feature type="binding site" evidence="1">
    <location>
        <position position="297"/>
    </location>
    <ligand>
        <name>Mn(2+)</name>
        <dbReference type="ChEBI" id="CHEBI:29035"/>
        <label>1</label>
    </ligand>
</feature>
<feature type="binding site" evidence="1">
    <location>
        <position position="314"/>
    </location>
    <ligand>
        <name>ATP</name>
        <dbReference type="ChEBI" id="CHEBI:30616"/>
        <label>1</label>
    </ligand>
</feature>
<feature type="binding site" evidence="1">
    <location>
        <position position="314"/>
    </location>
    <ligand>
        <name>Mg(2+)</name>
        <dbReference type="ChEBI" id="CHEBI:18420"/>
        <label>1</label>
    </ligand>
</feature>
<feature type="binding site" evidence="1">
    <location>
        <position position="314"/>
    </location>
    <ligand>
        <name>Mg(2+)</name>
        <dbReference type="ChEBI" id="CHEBI:18420"/>
        <label>2</label>
    </ligand>
</feature>
<feature type="binding site" evidence="1">
    <location>
        <position position="314"/>
    </location>
    <ligand>
        <name>Mn(2+)</name>
        <dbReference type="ChEBI" id="CHEBI:29035"/>
        <label>1</label>
    </ligand>
</feature>
<feature type="binding site" evidence="1">
    <location>
        <position position="314"/>
    </location>
    <ligand>
        <name>Mn(2+)</name>
        <dbReference type="ChEBI" id="CHEBI:29035"/>
        <label>2</label>
    </ligand>
</feature>
<feature type="binding site" evidence="1">
    <location>
        <position position="316"/>
    </location>
    <ligand>
        <name>Mg(2+)</name>
        <dbReference type="ChEBI" id="CHEBI:18420"/>
        <label>2</label>
    </ligand>
</feature>
<feature type="binding site" evidence="1">
    <location>
        <position position="316"/>
    </location>
    <ligand>
        <name>Mn(2+)</name>
        <dbReference type="ChEBI" id="CHEBI:29035"/>
        <label>2</label>
    </ligand>
</feature>
<feature type="binding site" evidence="1">
    <location>
        <position position="725"/>
    </location>
    <ligand>
        <name>ATP</name>
        <dbReference type="ChEBI" id="CHEBI:30616"/>
        <label>2</label>
    </ligand>
</feature>
<feature type="binding site" evidence="1">
    <location>
        <position position="764"/>
    </location>
    <ligand>
        <name>ATP</name>
        <dbReference type="ChEBI" id="CHEBI:30616"/>
        <label>2</label>
    </ligand>
</feature>
<feature type="binding site" evidence="1">
    <location>
        <position position="766"/>
    </location>
    <ligand>
        <name>ATP</name>
        <dbReference type="ChEBI" id="CHEBI:30616"/>
        <label>2</label>
    </ligand>
</feature>
<feature type="binding site" evidence="1">
    <location>
        <position position="771"/>
    </location>
    <ligand>
        <name>ATP</name>
        <dbReference type="ChEBI" id="CHEBI:30616"/>
        <label>2</label>
    </ligand>
</feature>
<feature type="binding site" evidence="1">
    <location>
        <position position="796"/>
    </location>
    <ligand>
        <name>ATP</name>
        <dbReference type="ChEBI" id="CHEBI:30616"/>
        <label>2</label>
    </ligand>
</feature>
<feature type="binding site" evidence="1">
    <location>
        <position position="797"/>
    </location>
    <ligand>
        <name>ATP</name>
        <dbReference type="ChEBI" id="CHEBI:30616"/>
        <label>2</label>
    </ligand>
</feature>
<feature type="binding site" evidence="1">
    <location>
        <position position="798"/>
    </location>
    <ligand>
        <name>ATP</name>
        <dbReference type="ChEBI" id="CHEBI:30616"/>
        <label>2</label>
    </ligand>
</feature>
<feature type="binding site" evidence="1">
    <location>
        <position position="799"/>
    </location>
    <ligand>
        <name>ATP</name>
        <dbReference type="ChEBI" id="CHEBI:30616"/>
        <label>2</label>
    </ligand>
</feature>
<feature type="binding site" evidence="1">
    <location>
        <position position="839"/>
    </location>
    <ligand>
        <name>ATP</name>
        <dbReference type="ChEBI" id="CHEBI:30616"/>
        <label>2</label>
    </ligand>
</feature>
<feature type="binding site" evidence="1">
    <location>
        <position position="839"/>
    </location>
    <ligand>
        <name>Mg(2+)</name>
        <dbReference type="ChEBI" id="CHEBI:18420"/>
        <label>3</label>
    </ligand>
</feature>
<feature type="binding site" evidence="1">
    <location>
        <position position="839"/>
    </location>
    <ligand>
        <name>Mn(2+)</name>
        <dbReference type="ChEBI" id="CHEBI:29035"/>
        <label>3</label>
    </ligand>
</feature>
<feature type="binding site" evidence="1">
    <location>
        <position position="851"/>
    </location>
    <ligand>
        <name>ATP</name>
        <dbReference type="ChEBI" id="CHEBI:30616"/>
        <label>2</label>
    </ligand>
</feature>
<feature type="binding site" evidence="1">
    <location>
        <position position="851"/>
    </location>
    <ligand>
        <name>Mg(2+)</name>
        <dbReference type="ChEBI" id="CHEBI:18420"/>
        <label>3</label>
    </ligand>
</feature>
<feature type="binding site" evidence="1">
    <location>
        <position position="851"/>
    </location>
    <ligand>
        <name>Mg(2+)</name>
        <dbReference type="ChEBI" id="CHEBI:18420"/>
        <label>4</label>
    </ligand>
</feature>
<feature type="binding site" evidence="1">
    <location>
        <position position="851"/>
    </location>
    <ligand>
        <name>Mn(2+)</name>
        <dbReference type="ChEBI" id="CHEBI:29035"/>
        <label>3</label>
    </ligand>
</feature>
<feature type="binding site" evidence="1">
    <location>
        <position position="851"/>
    </location>
    <ligand>
        <name>Mn(2+)</name>
        <dbReference type="ChEBI" id="CHEBI:29035"/>
        <label>4</label>
    </ligand>
</feature>
<feature type="binding site" evidence="1">
    <location>
        <position position="853"/>
    </location>
    <ligand>
        <name>Mg(2+)</name>
        <dbReference type="ChEBI" id="CHEBI:18420"/>
        <label>4</label>
    </ligand>
</feature>
<feature type="binding site" evidence="1">
    <location>
        <position position="853"/>
    </location>
    <ligand>
        <name>Mn(2+)</name>
        <dbReference type="ChEBI" id="CHEBI:29035"/>
        <label>4</label>
    </ligand>
</feature>
<keyword id="KW-0028">Amino-acid biosynthesis</keyword>
<keyword id="KW-0055">Arginine biosynthesis</keyword>
<keyword id="KW-0067">ATP-binding</keyword>
<keyword id="KW-0436">Ligase</keyword>
<keyword id="KW-0460">Magnesium</keyword>
<keyword id="KW-0464">Manganese</keyword>
<keyword id="KW-0479">Metal-binding</keyword>
<keyword id="KW-0547">Nucleotide-binding</keyword>
<keyword id="KW-0665">Pyrimidine biosynthesis</keyword>
<keyword id="KW-1185">Reference proteome</keyword>
<keyword id="KW-0677">Repeat</keyword>
<organism>
    <name type="scientific">Halobacterium salinarum (strain ATCC 700922 / JCM 11081 / NRC-1)</name>
    <name type="common">Halobacterium halobium</name>
    <dbReference type="NCBI Taxonomy" id="64091"/>
    <lineage>
        <taxon>Archaea</taxon>
        <taxon>Methanobacteriati</taxon>
        <taxon>Methanobacteriota</taxon>
        <taxon>Stenosarchaea group</taxon>
        <taxon>Halobacteria</taxon>
        <taxon>Halobacteriales</taxon>
        <taxon>Halobacteriaceae</taxon>
        <taxon>Halobacterium</taxon>
        <taxon>Halobacterium salinarum NRC-34001</taxon>
    </lineage>
</organism>